<accession>P57927</accession>
<comment type="function">
    <text evidence="1">Catalyzes the transfer of a two-carbon ketol group from a ketose donor to an aldose acceptor, via a covalent intermediate with the cofactor thiamine pyrophosphate.</text>
</comment>
<comment type="catalytic activity">
    <reaction>
        <text>D-sedoheptulose 7-phosphate + D-glyceraldehyde 3-phosphate = aldehydo-D-ribose 5-phosphate + D-xylulose 5-phosphate</text>
        <dbReference type="Rhea" id="RHEA:10508"/>
        <dbReference type="ChEBI" id="CHEBI:57483"/>
        <dbReference type="ChEBI" id="CHEBI:57737"/>
        <dbReference type="ChEBI" id="CHEBI:58273"/>
        <dbReference type="ChEBI" id="CHEBI:59776"/>
        <dbReference type="EC" id="2.2.1.1"/>
    </reaction>
</comment>
<comment type="cofactor">
    <cofactor evidence="1">
        <name>Mg(2+)</name>
        <dbReference type="ChEBI" id="CHEBI:18420"/>
    </cofactor>
    <cofactor evidence="1">
        <name>Ca(2+)</name>
        <dbReference type="ChEBI" id="CHEBI:29108"/>
    </cofactor>
    <cofactor evidence="1">
        <name>Mn(2+)</name>
        <dbReference type="ChEBI" id="CHEBI:29035"/>
    </cofactor>
    <cofactor evidence="1">
        <name>Co(2+)</name>
        <dbReference type="ChEBI" id="CHEBI:48828"/>
    </cofactor>
    <text evidence="1">Binds 1 Mg(2+) ion per subunit. Can also utilize other divalent metal cations, such as Ca(2+), Mn(2+) and Co(2+).</text>
</comment>
<comment type="cofactor">
    <cofactor evidence="1">
        <name>thiamine diphosphate</name>
        <dbReference type="ChEBI" id="CHEBI:58937"/>
    </cofactor>
    <text evidence="1">Binds 1 thiamine pyrophosphate per subunit.</text>
</comment>
<comment type="subunit">
    <text evidence="1">Homodimer.</text>
</comment>
<comment type="similarity">
    <text evidence="2">Belongs to the transketolase family.</text>
</comment>
<evidence type="ECO:0000250" key="1"/>
<evidence type="ECO:0000305" key="2"/>
<feature type="chain" id="PRO_0000191864" description="Transketolase 1">
    <location>
        <begin position="1"/>
        <end position="668"/>
    </location>
</feature>
<feature type="active site" description="Proton donor" evidence="1">
    <location>
        <position position="413"/>
    </location>
</feature>
<feature type="binding site" evidence="1">
    <location>
        <position position="26"/>
    </location>
    <ligand>
        <name>substrate</name>
    </ligand>
</feature>
<feature type="binding site" evidence="1">
    <location>
        <position position="66"/>
    </location>
    <ligand>
        <name>thiamine diphosphate</name>
        <dbReference type="ChEBI" id="CHEBI:58937"/>
    </ligand>
</feature>
<feature type="binding site" evidence="1">
    <location>
        <begin position="114"/>
        <end position="116"/>
    </location>
    <ligand>
        <name>thiamine diphosphate</name>
        <dbReference type="ChEBI" id="CHEBI:58937"/>
    </ligand>
</feature>
<feature type="binding site" evidence="1">
    <location>
        <position position="155"/>
    </location>
    <ligand>
        <name>Mg(2+)</name>
        <dbReference type="ChEBI" id="CHEBI:18420"/>
    </ligand>
</feature>
<feature type="binding site" evidence="1">
    <location>
        <position position="156"/>
    </location>
    <ligand>
        <name>thiamine diphosphate</name>
        <dbReference type="ChEBI" id="CHEBI:58937"/>
    </ligand>
</feature>
<feature type="binding site" evidence="1">
    <location>
        <position position="185"/>
    </location>
    <ligand>
        <name>Mg(2+)</name>
        <dbReference type="ChEBI" id="CHEBI:18420"/>
    </ligand>
</feature>
<feature type="binding site" evidence="1">
    <location>
        <position position="185"/>
    </location>
    <ligand>
        <name>thiamine diphosphate</name>
        <dbReference type="ChEBI" id="CHEBI:58937"/>
    </ligand>
</feature>
<feature type="binding site" evidence="1">
    <location>
        <position position="187"/>
    </location>
    <ligand>
        <name>Mg(2+)</name>
        <dbReference type="ChEBI" id="CHEBI:18420"/>
    </ligand>
</feature>
<feature type="binding site" evidence="1">
    <location>
        <position position="261"/>
    </location>
    <ligand>
        <name>substrate</name>
    </ligand>
</feature>
<feature type="binding site" evidence="1">
    <location>
        <position position="261"/>
    </location>
    <ligand>
        <name>thiamine diphosphate</name>
        <dbReference type="ChEBI" id="CHEBI:58937"/>
    </ligand>
</feature>
<feature type="binding site" evidence="1">
    <location>
        <position position="358"/>
    </location>
    <ligand>
        <name>substrate</name>
    </ligand>
</feature>
<feature type="binding site" evidence="1">
    <location>
        <position position="385"/>
    </location>
    <ligand>
        <name>substrate</name>
    </ligand>
</feature>
<feature type="binding site" evidence="1">
    <location>
        <position position="439"/>
    </location>
    <ligand>
        <name>thiamine diphosphate</name>
        <dbReference type="ChEBI" id="CHEBI:58937"/>
    </ligand>
</feature>
<feature type="binding site" evidence="1">
    <location>
        <position position="463"/>
    </location>
    <ligand>
        <name>substrate</name>
    </ligand>
</feature>
<feature type="binding site" evidence="1">
    <location>
        <position position="471"/>
    </location>
    <ligand>
        <name>substrate</name>
    </ligand>
</feature>
<feature type="binding site" evidence="1">
    <location>
        <position position="522"/>
    </location>
    <ligand>
        <name>substrate</name>
    </ligand>
</feature>
<feature type="site" description="Important for catalytic activity" evidence="1">
    <location>
        <position position="26"/>
    </location>
</feature>
<feature type="site" description="Important for catalytic activity" evidence="1">
    <location>
        <position position="261"/>
    </location>
</feature>
<keyword id="KW-0106">Calcium</keyword>
<keyword id="KW-0460">Magnesium</keyword>
<keyword id="KW-0479">Metal-binding</keyword>
<keyword id="KW-1185">Reference proteome</keyword>
<keyword id="KW-0786">Thiamine pyrophosphate</keyword>
<keyword id="KW-0808">Transferase</keyword>
<reference key="1">
    <citation type="journal article" date="2001" name="Proc. Natl. Acad. Sci. U.S.A.">
        <title>Complete genomic sequence of Pasteurella multocida Pm70.</title>
        <authorList>
            <person name="May B.J."/>
            <person name="Zhang Q."/>
            <person name="Li L.L."/>
            <person name="Paustian M.L."/>
            <person name="Whittam T.S."/>
            <person name="Kapur V."/>
        </authorList>
    </citation>
    <scope>NUCLEOTIDE SEQUENCE [LARGE SCALE GENOMIC DNA]</scope>
    <source>
        <strain>Pm70</strain>
    </source>
</reference>
<protein>
    <recommendedName>
        <fullName>Transketolase 1</fullName>
        <shortName>TK 1</shortName>
        <ecNumber>2.2.1.1</ecNumber>
    </recommendedName>
</protein>
<organism>
    <name type="scientific">Pasteurella multocida (strain Pm70)</name>
    <dbReference type="NCBI Taxonomy" id="272843"/>
    <lineage>
        <taxon>Bacteria</taxon>
        <taxon>Pseudomonadati</taxon>
        <taxon>Pseudomonadota</taxon>
        <taxon>Gammaproteobacteria</taxon>
        <taxon>Pasteurellales</taxon>
        <taxon>Pasteurellaceae</taxon>
        <taxon>Pasteurella</taxon>
    </lineage>
</organism>
<sequence>MATRRELANAIRFLSMDAVQKAKSGHPGAPMGMADIAEVLWRDFLKHNPSNPHWADRDRFILSNGHGSMLIYSLLHLSGYDLSIEDLKQFRQLHSKTPGHPEYGYAPGVETTTGPLGQGITNAVGFAIAEKTLAHQFNRPGHEIVDHHTYVFLGDGCLMEGISHEACSLAGTLGLGKLIAFYDDNNISIDGHVDGWFTDDTQKRFEAYGWHVIPAVDGHNPEQILEAVKQAQAETTKPTLIICKTIIGYGSPNKANSHDCHGAPLGDDEIAAAREFLKWEHAPFEIPAEIYAQWDAKEKGQVAEKAWEEKLAAYAKAYPELAAEFTRRVNAELPANWAAESQAFIEHLQANPANIASRKASQNAIEAYAKLLPEFLGGSADLASSNLTLWSGSKPIRAVENADGNYINYGVREFGMSAIMNGIALHGGFIPYGATFLMFMEYAHNAVRMAALMKQRSLFVYTHDSIGLGEDGPTHQPVEQTSALRLIPNLETWRPCDQVESAVAWKAAVERKEGPSALIFTRQNLAQMDRTAEQLANVARGGYVLRHCCENQNCPDLILIATGSEVELAMKAADVLDAEGVKVRVVSMPSTNVFDKQDAAYRESVLPSHITKRVAIEAGIADFWYKYVGFEGRVVGMNSFGESAPADQLFKLFGFTVENIVEKAKAIL</sequence>
<name>TKT1_PASMU</name>
<dbReference type="EC" id="2.2.1.1"/>
<dbReference type="EMBL" id="AE004439">
    <property type="protein sequence ID" value="AAK03326.1"/>
    <property type="molecule type" value="Genomic_DNA"/>
</dbReference>
<dbReference type="SMR" id="P57927"/>
<dbReference type="STRING" id="272843.PM1242"/>
<dbReference type="EnsemblBacteria" id="AAK03326">
    <property type="protein sequence ID" value="AAK03326"/>
    <property type="gene ID" value="PM1242"/>
</dbReference>
<dbReference type="KEGG" id="pmu:PM1242"/>
<dbReference type="PATRIC" id="fig|272843.6.peg.1252"/>
<dbReference type="HOGENOM" id="CLU_009227_0_0_6"/>
<dbReference type="OrthoDB" id="8732661at2"/>
<dbReference type="Proteomes" id="UP000000809">
    <property type="component" value="Chromosome"/>
</dbReference>
<dbReference type="GO" id="GO:0005829">
    <property type="term" value="C:cytosol"/>
    <property type="evidence" value="ECO:0007669"/>
    <property type="project" value="TreeGrafter"/>
</dbReference>
<dbReference type="GO" id="GO:0046872">
    <property type="term" value="F:metal ion binding"/>
    <property type="evidence" value="ECO:0007669"/>
    <property type="project" value="UniProtKB-KW"/>
</dbReference>
<dbReference type="GO" id="GO:0004802">
    <property type="term" value="F:transketolase activity"/>
    <property type="evidence" value="ECO:0007669"/>
    <property type="project" value="UniProtKB-EC"/>
</dbReference>
<dbReference type="GO" id="GO:0006098">
    <property type="term" value="P:pentose-phosphate shunt"/>
    <property type="evidence" value="ECO:0007669"/>
    <property type="project" value="TreeGrafter"/>
</dbReference>
<dbReference type="CDD" id="cd07033">
    <property type="entry name" value="TPP_PYR_DXS_TK_like"/>
    <property type="match status" value="1"/>
</dbReference>
<dbReference type="CDD" id="cd02012">
    <property type="entry name" value="TPP_TK"/>
    <property type="match status" value="1"/>
</dbReference>
<dbReference type="FunFam" id="3.40.50.920:FF:000003">
    <property type="entry name" value="Transketolase"/>
    <property type="match status" value="1"/>
</dbReference>
<dbReference type="FunFam" id="3.40.50.970:FF:000003">
    <property type="entry name" value="Transketolase"/>
    <property type="match status" value="1"/>
</dbReference>
<dbReference type="FunFam" id="3.40.50.970:FF:000004">
    <property type="entry name" value="Transketolase"/>
    <property type="match status" value="1"/>
</dbReference>
<dbReference type="Gene3D" id="3.40.50.920">
    <property type="match status" value="1"/>
</dbReference>
<dbReference type="Gene3D" id="3.40.50.970">
    <property type="match status" value="2"/>
</dbReference>
<dbReference type="InterPro" id="IPR029061">
    <property type="entry name" value="THDP-binding"/>
</dbReference>
<dbReference type="InterPro" id="IPR009014">
    <property type="entry name" value="Transketo_C/PFOR_II"/>
</dbReference>
<dbReference type="InterPro" id="IPR055152">
    <property type="entry name" value="Transketolase-like_C_2"/>
</dbReference>
<dbReference type="InterPro" id="IPR005475">
    <property type="entry name" value="Transketolase-like_Pyr-bd"/>
</dbReference>
<dbReference type="InterPro" id="IPR005478">
    <property type="entry name" value="Transketolase_bac-like"/>
</dbReference>
<dbReference type="InterPro" id="IPR020826">
    <property type="entry name" value="Transketolase_BS"/>
</dbReference>
<dbReference type="InterPro" id="IPR049557">
    <property type="entry name" value="Transketolase_CS"/>
</dbReference>
<dbReference type="InterPro" id="IPR033247">
    <property type="entry name" value="Transketolase_fam"/>
</dbReference>
<dbReference type="InterPro" id="IPR005474">
    <property type="entry name" value="Transketolase_N"/>
</dbReference>
<dbReference type="NCBIfam" id="TIGR00232">
    <property type="entry name" value="tktlase_bact"/>
    <property type="match status" value="1"/>
</dbReference>
<dbReference type="PANTHER" id="PTHR43522">
    <property type="entry name" value="TRANSKETOLASE"/>
    <property type="match status" value="1"/>
</dbReference>
<dbReference type="PANTHER" id="PTHR43522:SF2">
    <property type="entry name" value="TRANSKETOLASE 1-RELATED"/>
    <property type="match status" value="1"/>
</dbReference>
<dbReference type="Pfam" id="PF02779">
    <property type="entry name" value="Transket_pyr"/>
    <property type="match status" value="1"/>
</dbReference>
<dbReference type="Pfam" id="PF22613">
    <property type="entry name" value="Transketolase_C_1"/>
    <property type="match status" value="1"/>
</dbReference>
<dbReference type="Pfam" id="PF00456">
    <property type="entry name" value="Transketolase_N"/>
    <property type="match status" value="1"/>
</dbReference>
<dbReference type="SMART" id="SM00861">
    <property type="entry name" value="Transket_pyr"/>
    <property type="match status" value="1"/>
</dbReference>
<dbReference type="SUPFAM" id="SSF52518">
    <property type="entry name" value="Thiamin diphosphate-binding fold (THDP-binding)"/>
    <property type="match status" value="2"/>
</dbReference>
<dbReference type="SUPFAM" id="SSF52922">
    <property type="entry name" value="TK C-terminal domain-like"/>
    <property type="match status" value="1"/>
</dbReference>
<dbReference type="PROSITE" id="PS00801">
    <property type="entry name" value="TRANSKETOLASE_1"/>
    <property type="match status" value="1"/>
</dbReference>
<dbReference type="PROSITE" id="PS00802">
    <property type="entry name" value="TRANSKETOLASE_2"/>
    <property type="match status" value="1"/>
</dbReference>
<proteinExistence type="inferred from homology"/>
<gene>
    <name type="primary">tktA</name>
    <name type="ordered locus">PM1242</name>
</gene>